<accession>Q1CFD5</accession>
<accession>C4GWZ4</accession>
<gene>
    <name evidence="1" type="primary">queF</name>
    <name type="ordered locus">YPN_2968</name>
    <name type="ORF">YP516_3361</name>
</gene>
<protein>
    <recommendedName>
        <fullName evidence="1">NADPH-dependent 7-cyano-7-deazaguanine reductase</fullName>
        <ecNumber evidence="1">1.7.1.13</ecNumber>
    </recommendedName>
    <alternativeName>
        <fullName evidence="1">7-cyano-7-carbaguanine reductase</fullName>
    </alternativeName>
    <alternativeName>
        <fullName evidence="1">NADPH-dependent nitrile oxidoreductase</fullName>
    </alternativeName>
    <alternativeName>
        <fullName evidence="1">PreQ(0) reductase</fullName>
    </alternativeName>
</protein>
<evidence type="ECO:0000255" key="1">
    <source>
        <dbReference type="HAMAP-Rule" id="MF_00817"/>
    </source>
</evidence>
<comment type="function">
    <text evidence="1">Catalyzes the NADPH-dependent reduction of 7-cyano-7-deazaguanine (preQ0) to 7-aminomethyl-7-deazaguanine (preQ1).</text>
</comment>
<comment type="catalytic activity">
    <reaction evidence="1">
        <text>7-aminomethyl-7-carbaguanine + 2 NADP(+) = 7-cyano-7-deazaguanine + 2 NADPH + 3 H(+)</text>
        <dbReference type="Rhea" id="RHEA:13409"/>
        <dbReference type="ChEBI" id="CHEBI:15378"/>
        <dbReference type="ChEBI" id="CHEBI:45075"/>
        <dbReference type="ChEBI" id="CHEBI:57783"/>
        <dbReference type="ChEBI" id="CHEBI:58349"/>
        <dbReference type="ChEBI" id="CHEBI:58703"/>
        <dbReference type="EC" id="1.7.1.13"/>
    </reaction>
</comment>
<comment type="pathway">
    <text evidence="1">tRNA modification; tRNA-queuosine biosynthesis.</text>
</comment>
<comment type="subunit">
    <text evidence="1">Homodimer.</text>
</comment>
<comment type="subcellular location">
    <subcellularLocation>
        <location evidence="1">Cytoplasm</location>
    </subcellularLocation>
</comment>
<comment type="similarity">
    <text evidence="1">Belongs to the GTP cyclohydrolase I family. QueF type 2 subfamily.</text>
</comment>
<keyword id="KW-0963">Cytoplasm</keyword>
<keyword id="KW-0521">NADP</keyword>
<keyword id="KW-0560">Oxidoreductase</keyword>
<keyword id="KW-0671">Queuosine biosynthesis</keyword>
<organism>
    <name type="scientific">Yersinia pestis bv. Antiqua (strain Nepal516)</name>
    <dbReference type="NCBI Taxonomy" id="377628"/>
    <lineage>
        <taxon>Bacteria</taxon>
        <taxon>Pseudomonadati</taxon>
        <taxon>Pseudomonadota</taxon>
        <taxon>Gammaproteobacteria</taxon>
        <taxon>Enterobacterales</taxon>
        <taxon>Yersiniaceae</taxon>
        <taxon>Yersinia</taxon>
    </lineage>
</organism>
<sequence length="281" mass="32082">MSSYQNHKALAELTLGKPTAYCDYYDATLLQAVPRSMNREPLGLYPDNLPFHGADIWTLYELSWLNSNGLPQVAVGEISLNADSINLIESKSFKLYLNSFNQTIFADKESVRMTLQRDLAACAQGNVSVALYDLDEITGQPISNFNGECLDKQDIRIDSYEFNADYLQGAAGKDHVEESLVSHLLKSNCLITHQPDWGSVQIHYRGPQIDHEALLRYLVSFRHHNEFHEQCVERIFNDIMRFCQPETLTVYARYTRRGGLDINPWRSNTDFVPLTGRLARQ</sequence>
<name>QUEF_YERPN</name>
<reference key="1">
    <citation type="journal article" date="2006" name="J. Bacteriol.">
        <title>Complete genome sequence of Yersinia pestis strains Antiqua and Nepal516: evidence of gene reduction in an emerging pathogen.</title>
        <authorList>
            <person name="Chain P.S.G."/>
            <person name="Hu P."/>
            <person name="Malfatti S.A."/>
            <person name="Radnedge L."/>
            <person name="Larimer F."/>
            <person name="Vergez L.M."/>
            <person name="Worsham P."/>
            <person name="Chu M.C."/>
            <person name="Andersen G.L."/>
        </authorList>
    </citation>
    <scope>NUCLEOTIDE SEQUENCE [LARGE SCALE GENOMIC DNA]</scope>
    <source>
        <strain>Nepal516</strain>
    </source>
</reference>
<reference key="2">
    <citation type="submission" date="2009-04" db="EMBL/GenBank/DDBJ databases">
        <title>Yersinia pestis Nepal516A whole genome shotgun sequencing project.</title>
        <authorList>
            <person name="Plunkett G. III"/>
            <person name="Anderson B.D."/>
            <person name="Baumler D.J."/>
            <person name="Burland V."/>
            <person name="Cabot E.L."/>
            <person name="Glasner J.D."/>
            <person name="Mau B."/>
            <person name="Neeno-Eckwall E."/>
            <person name="Perna N.T."/>
            <person name="Munk A.C."/>
            <person name="Tapia R."/>
            <person name="Green L.D."/>
            <person name="Rogers Y.C."/>
            <person name="Detter J.C."/>
            <person name="Bruce D.C."/>
            <person name="Brettin T.S."/>
        </authorList>
    </citation>
    <scope>NUCLEOTIDE SEQUENCE [LARGE SCALE GENOMIC DNA]</scope>
    <source>
        <strain>Nepal516</strain>
    </source>
</reference>
<proteinExistence type="inferred from homology"/>
<dbReference type="EC" id="1.7.1.13" evidence="1"/>
<dbReference type="EMBL" id="CP000305">
    <property type="protein sequence ID" value="ABG19295.1"/>
    <property type="molecule type" value="Genomic_DNA"/>
</dbReference>
<dbReference type="EMBL" id="ACNQ01000017">
    <property type="protein sequence ID" value="EEO75444.1"/>
    <property type="molecule type" value="Genomic_DNA"/>
</dbReference>
<dbReference type="RefSeq" id="WP_002212122.1">
    <property type="nucleotide sequence ID" value="NZ_ACNQ01000017.1"/>
</dbReference>
<dbReference type="SMR" id="Q1CFD5"/>
<dbReference type="GeneID" id="57977527"/>
<dbReference type="KEGG" id="ypn:YPN_2968"/>
<dbReference type="HOGENOM" id="CLU_054738_0_0_6"/>
<dbReference type="UniPathway" id="UPA00392"/>
<dbReference type="Proteomes" id="UP000008936">
    <property type="component" value="Chromosome"/>
</dbReference>
<dbReference type="GO" id="GO:0005737">
    <property type="term" value="C:cytoplasm"/>
    <property type="evidence" value="ECO:0007669"/>
    <property type="project" value="UniProtKB-SubCell"/>
</dbReference>
<dbReference type="GO" id="GO:0033739">
    <property type="term" value="F:preQ1 synthase activity"/>
    <property type="evidence" value="ECO:0007669"/>
    <property type="project" value="UniProtKB-UniRule"/>
</dbReference>
<dbReference type="GO" id="GO:0008616">
    <property type="term" value="P:queuosine biosynthetic process"/>
    <property type="evidence" value="ECO:0007669"/>
    <property type="project" value="UniProtKB-UniRule"/>
</dbReference>
<dbReference type="GO" id="GO:0006400">
    <property type="term" value="P:tRNA modification"/>
    <property type="evidence" value="ECO:0007669"/>
    <property type="project" value="UniProtKB-UniRule"/>
</dbReference>
<dbReference type="Gene3D" id="3.30.1130.10">
    <property type="match status" value="2"/>
</dbReference>
<dbReference type="HAMAP" id="MF_00817">
    <property type="entry name" value="QueF_type2"/>
    <property type="match status" value="1"/>
</dbReference>
<dbReference type="InterPro" id="IPR043133">
    <property type="entry name" value="GTP-CH-I_C/QueF"/>
</dbReference>
<dbReference type="InterPro" id="IPR050084">
    <property type="entry name" value="NADPH_dep_7-cyano-7-deazaG_red"/>
</dbReference>
<dbReference type="InterPro" id="IPR029500">
    <property type="entry name" value="QueF"/>
</dbReference>
<dbReference type="InterPro" id="IPR029139">
    <property type="entry name" value="QueF_N"/>
</dbReference>
<dbReference type="InterPro" id="IPR016428">
    <property type="entry name" value="QueF_type2"/>
</dbReference>
<dbReference type="NCBIfam" id="TIGR03138">
    <property type="entry name" value="QueF"/>
    <property type="match status" value="1"/>
</dbReference>
<dbReference type="PANTHER" id="PTHR34354">
    <property type="entry name" value="NADPH-DEPENDENT 7-CYANO-7-DEAZAGUANINE REDUCTASE"/>
    <property type="match status" value="1"/>
</dbReference>
<dbReference type="PANTHER" id="PTHR34354:SF1">
    <property type="entry name" value="NADPH-DEPENDENT 7-CYANO-7-DEAZAGUANINE REDUCTASE"/>
    <property type="match status" value="1"/>
</dbReference>
<dbReference type="Pfam" id="PF14489">
    <property type="entry name" value="QueF"/>
    <property type="match status" value="1"/>
</dbReference>
<dbReference type="Pfam" id="PF14819">
    <property type="entry name" value="QueF_N"/>
    <property type="match status" value="1"/>
</dbReference>
<dbReference type="PIRSF" id="PIRSF004750">
    <property type="entry name" value="Nitrile_oxidored_YqcD_prd"/>
    <property type="match status" value="1"/>
</dbReference>
<dbReference type="SUPFAM" id="SSF55620">
    <property type="entry name" value="Tetrahydrobiopterin biosynthesis enzymes-like"/>
    <property type="match status" value="1"/>
</dbReference>
<feature type="chain" id="PRO_1000062371" description="NADPH-dependent 7-cyano-7-deazaguanine reductase">
    <location>
        <begin position="1"/>
        <end position="281"/>
    </location>
</feature>
<feature type="active site" description="Thioimide intermediate" evidence="1">
    <location>
        <position position="189"/>
    </location>
</feature>
<feature type="active site" description="Proton donor" evidence="1">
    <location>
        <position position="196"/>
    </location>
</feature>
<feature type="binding site" evidence="1">
    <location>
        <begin position="88"/>
        <end position="90"/>
    </location>
    <ligand>
        <name>substrate</name>
    </ligand>
</feature>
<feature type="binding site" evidence="1">
    <location>
        <begin position="90"/>
        <end position="91"/>
    </location>
    <ligand>
        <name>NADPH</name>
        <dbReference type="ChEBI" id="CHEBI:57783"/>
    </ligand>
</feature>
<feature type="binding site" evidence="1">
    <location>
        <begin position="228"/>
        <end position="229"/>
    </location>
    <ligand>
        <name>substrate</name>
    </ligand>
</feature>
<feature type="binding site" evidence="1">
    <location>
        <begin position="257"/>
        <end position="258"/>
    </location>
    <ligand>
        <name>NADPH</name>
        <dbReference type="ChEBI" id="CHEBI:57783"/>
    </ligand>
</feature>